<protein>
    <recommendedName>
        <fullName evidence="1">Small ribosomal subunit protein uS14c</fullName>
    </recommendedName>
    <alternativeName>
        <fullName evidence="2">30S ribosomal protein S14, chloroplastic</fullName>
    </alternativeName>
</protein>
<gene>
    <name evidence="1" type="primary">rps14</name>
</gene>
<evidence type="ECO:0000255" key="1">
    <source>
        <dbReference type="HAMAP-Rule" id="MF_00537"/>
    </source>
</evidence>
<evidence type="ECO:0000305" key="2"/>
<name>RR14_CARPA</name>
<proteinExistence type="inferred from homology"/>
<reference key="1">
    <citation type="journal article" date="2008" name="Nature">
        <title>The draft genome of the transgenic tropical fruit tree papaya (Carica papaya Linnaeus).</title>
        <authorList>
            <person name="Ming R."/>
            <person name="Hou S."/>
            <person name="Feng Y."/>
            <person name="Yu Q."/>
            <person name="Dionne-Laporte A."/>
            <person name="Saw J.H."/>
            <person name="Senin P."/>
            <person name="Wang W."/>
            <person name="Ly B.V."/>
            <person name="Lewis K.L."/>
            <person name="Salzberg S.L."/>
            <person name="Feng L."/>
            <person name="Jones M.R."/>
            <person name="Skelton R.L."/>
            <person name="Murray J.E."/>
            <person name="Chen C."/>
            <person name="Qian W."/>
            <person name="Shen J."/>
            <person name="Du P."/>
            <person name="Eustice M."/>
            <person name="Tong E."/>
            <person name="Tang H."/>
            <person name="Lyons E."/>
            <person name="Paull R.E."/>
            <person name="Michael T.P."/>
            <person name="Wall K."/>
            <person name="Rice D.W."/>
            <person name="Albert H."/>
            <person name="Wang M.L."/>
            <person name="Zhu Y.J."/>
            <person name="Schatz M."/>
            <person name="Nagarajan N."/>
            <person name="Acob R.A."/>
            <person name="Guan P."/>
            <person name="Blas A."/>
            <person name="Wai C.M."/>
            <person name="Ackerman C.M."/>
            <person name="Ren Y."/>
            <person name="Liu C."/>
            <person name="Wang J."/>
            <person name="Wang J."/>
            <person name="Na J.K."/>
            <person name="Shakirov E.V."/>
            <person name="Haas B."/>
            <person name="Thimmapuram J."/>
            <person name="Nelson D."/>
            <person name="Wang X."/>
            <person name="Bowers J.E."/>
            <person name="Gschwend A.R."/>
            <person name="Delcher A.L."/>
            <person name="Singh R."/>
            <person name="Suzuki J.Y."/>
            <person name="Tripathi S."/>
            <person name="Neupane K."/>
            <person name="Wei H."/>
            <person name="Irikura B."/>
            <person name="Paidi M."/>
            <person name="Jiang N."/>
            <person name="Zhang W."/>
            <person name="Presting G."/>
            <person name="Windsor A."/>
            <person name="Navajas-Perez R."/>
            <person name="Torres M.J."/>
            <person name="Feltus F.A."/>
            <person name="Porter B."/>
            <person name="Li Y."/>
            <person name="Burroughs A.M."/>
            <person name="Luo M.C."/>
            <person name="Liu L."/>
            <person name="Christopher D.A."/>
            <person name="Mount S.M."/>
            <person name="Moore P.H."/>
            <person name="Sugimura T."/>
            <person name="Jiang J."/>
            <person name="Schuler M.A."/>
            <person name="Friedman V."/>
            <person name="Mitchell-Olds T."/>
            <person name="Shippen D.E."/>
            <person name="dePamphilis C.W."/>
            <person name="Palmer J.D."/>
            <person name="Freeling M."/>
            <person name="Paterson A.H."/>
            <person name="Gonsalves D."/>
            <person name="Wang L."/>
            <person name="Alam M."/>
        </authorList>
    </citation>
    <scope>NUCLEOTIDE SEQUENCE [LARGE SCALE GENOMIC DNA]</scope>
    <source>
        <strain>cv. SunUp</strain>
    </source>
</reference>
<accession>B1A933</accession>
<geneLocation type="chloroplast"/>
<comment type="function">
    <text evidence="1">Binds 16S rRNA, required for the assembly of 30S particles.</text>
</comment>
<comment type="subunit">
    <text evidence="1">Part of the 30S ribosomal subunit.</text>
</comment>
<comment type="subcellular location">
    <subcellularLocation>
        <location>Plastid</location>
        <location>Chloroplast</location>
    </subcellularLocation>
</comment>
<comment type="similarity">
    <text evidence="1">Belongs to the universal ribosomal protein uS14 family.</text>
</comment>
<sequence>MAKKSLIHREKKRQKLEQKYHLIRRSSKKEISKVPSLSDKWKIHGKLQSSPRNSAPTRLHRRCFSTGRPRANYRDFGLSGHILREMVHACLLPGATRSSW</sequence>
<dbReference type="EMBL" id="EU431223">
    <property type="protein sequence ID" value="ABY86780.1"/>
    <property type="molecule type" value="Genomic_DNA"/>
</dbReference>
<dbReference type="RefSeq" id="YP_001671681.1">
    <property type="nucleotide sequence ID" value="NC_010323.1"/>
</dbReference>
<dbReference type="SMR" id="B1A933"/>
<dbReference type="GeneID" id="5878338"/>
<dbReference type="KEGG" id="cpap:5878338"/>
<dbReference type="OrthoDB" id="1871635at2759"/>
<dbReference type="GO" id="GO:0009507">
    <property type="term" value="C:chloroplast"/>
    <property type="evidence" value="ECO:0007669"/>
    <property type="project" value="UniProtKB-SubCell"/>
</dbReference>
<dbReference type="GO" id="GO:0015935">
    <property type="term" value="C:small ribosomal subunit"/>
    <property type="evidence" value="ECO:0007669"/>
    <property type="project" value="TreeGrafter"/>
</dbReference>
<dbReference type="GO" id="GO:0019843">
    <property type="term" value="F:rRNA binding"/>
    <property type="evidence" value="ECO:0007669"/>
    <property type="project" value="UniProtKB-UniRule"/>
</dbReference>
<dbReference type="GO" id="GO:0003735">
    <property type="term" value="F:structural constituent of ribosome"/>
    <property type="evidence" value="ECO:0007669"/>
    <property type="project" value="InterPro"/>
</dbReference>
<dbReference type="GO" id="GO:0006412">
    <property type="term" value="P:translation"/>
    <property type="evidence" value="ECO:0007669"/>
    <property type="project" value="UniProtKB-UniRule"/>
</dbReference>
<dbReference type="FunFam" id="1.10.287.1480:FF:000001">
    <property type="entry name" value="30S ribosomal protein S14"/>
    <property type="match status" value="1"/>
</dbReference>
<dbReference type="Gene3D" id="1.10.287.1480">
    <property type="match status" value="1"/>
</dbReference>
<dbReference type="HAMAP" id="MF_00537">
    <property type="entry name" value="Ribosomal_uS14_1"/>
    <property type="match status" value="1"/>
</dbReference>
<dbReference type="InterPro" id="IPR001209">
    <property type="entry name" value="Ribosomal_uS14"/>
</dbReference>
<dbReference type="InterPro" id="IPR023036">
    <property type="entry name" value="Ribosomal_uS14_bac/plastid"/>
</dbReference>
<dbReference type="InterPro" id="IPR018271">
    <property type="entry name" value="Ribosomal_uS14_CS"/>
</dbReference>
<dbReference type="NCBIfam" id="NF006477">
    <property type="entry name" value="PRK08881.1"/>
    <property type="match status" value="1"/>
</dbReference>
<dbReference type="PANTHER" id="PTHR19836">
    <property type="entry name" value="30S RIBOSOMAL PROTEIN S14"/>
    <property type="match status" value="1"/>
</dbReference>
<dbReference type="PANTHER" id="PTHR19836:SF19">
    <property type="entry name" value="SMALL RIBOSOMAL SUBUNIT PROTEIN US14M"/>
    <property type="match status" value="1"/>
</dbReference>
<dbReference type="Pfam" id="PF00253">
    <property type="entry name" value="Ribosomal_S14"/>
    <property type="match status" value="1"/>
</dbReference>
<dbReference type="SUPFAM" id="SSF57716">
    <property type="entry name" value="Glucocorticoid receptor-like (DNA-binding domain)"/>
    <property type="match status" value="1"/>
</dbReference>
<dbReference type="PROSITE" id="PS00527">
    <property type="entry name" value="RIBOSOMAL_S14"/>
    <property type="match status" value="1"/>
</dbReference>
<feature type="chain" id="PRO_0000354404" description="Small ribosomal subunit protein uS14c">
    <location>
        <begin position="1"/>
        <end position="100"/>
    </location>
</feature>
<keyword id="KW-0150">Chloroplast</keyword>
<keyword id="KW-0934">Plastid</keyword>
<keyword id="KW-0687">Ribonucleoprotein</keyword>
<keyword id="KW-0689">Ribosomal protein</keyword>
<keyword id="KW-0694">RNA-binding</keyword>
<keyword id="KW-0699">rRNA-binding</keyword>
<organism>
    <name type="scientific">Carica papaya</name>
    <name type="common">Papaya</name>
    <dbReference type="NCBI Taxonomy" id="3649"/>
    <lineage>
        <taxon>Eukaryota</taxon>
        <taxon>Viridiplantae</taxon>
        <taxon>Streptophyta</taxon>
        <taxon>Embryophyta</taxon>
        <taxon>Tracheophyta</taxon>
        <taxon>Spermatophyta</taxon>
        <taxon>Magnoliopsida</taxon>
        <taxon>eudicotyledons</taxon>
        <taxon>Gunneridae</taxon>
        <taxon>Pentapetalae</taxon>
        <taxon>rosids</taxon>
        <taxon>malvids</taxon>
        <taxon>Brassicales</taxon>
        <taxon>Caricaceae</taxon>
        <taxon>Carica</taxon>
    </lineage>
</organism>